<reference key="1">
    <citation type="submission" date="2009-04" db="EMBL/GenBank/DDBJ databases">
        <title>Genome sequence of Bacillus anthracis A0248.</title>
        <authorList>
            <person name="Dodson R.J."/>
            <person name="Munk A.C."/>
            <person name="Bruce D."/>
            <person name="Detter C."/>
            <person name="Tapia R."/>
            <person name="Sutton G."/>
            <person name="Sims D."/>
            <person name="Brettin T."/>
        </authorList>
    </citation>
    <scope>NUCLEOTIDE SEQUENCE [LARGE SCALE GENOMIC DNA]</scope>
    <source>
        <strain>A0248</strain>
    </source>
</reference>
<keyword id="KW-0067">ATP-binding</keyword>
<keyword id="KW-0436">Ligase</keyword>
<keyword id="KW-0474">Menaquinone biosynthesis</keyword>
<keyword id="KW-0547">Nucleotide-binding</keyword>
<dbReference type="EC" id="6.2.1.26" evidence="1"/>
<dbReference type="EMBL" id="CP001598">
    <property type="protein sequence ID" value="ACQ50607.1"/>
    <property type="molecule type" value="Genomic_DNA"/>
</dbReference>
<dbReference type="SMR" id="C3PCK3"/>
<dbReference type="KEGG" id="bai:BAA_5120"/>
<dbReference type="HOGENOM" id="CLU_000022_59_0_9"/>
<dbReference type="UniPathway" id="UPA00079"/>
<dbReference type="UniPathway" id="UPA01057">
    <property type="reaction ID" value="UER00166"/>
</dbReference>
<dbReference type="GO" id="GO:0005524">
    <property type="term" value="F:ATP binding"/>
    <property type="evidence" value="ECO:0007669"/>
    <property type="project" value="UniProtKB-KW"/>
</dbReference>
<dbReference type="GO" id="GO:0008756">
    <property type="term" value="F:o-succinylbenzoate-CoA ligase activity"/>
    <property type="evidence" value="ECO:0007669"/>
    <property type="project" value="UniProtKB-UniRule"/>
</dbReference>
<dbReference type="GO" id="GO:0009234">
    <property type="term" value="P:menaquinone biosynthetic process"/>
    <property type="evidence" value="ECO:0007669"/>
    <property type="project" value="UniProtKB-UniRule"/>
</dbReference>
<dbReference type="CDD" id="cd05912">
    <property type="entry name" value="OSB_CoA_lg"/>
    <property type="match status" value="1"/>
</dbReference>
<dbReference type="FunFam" id="3.30.300.30:FF:000008">
    <property type="entry name" value="2,3-dihydroxybenzoate-AMP ligase"/>
    <property type="match status" value="1"/>
</dbReference>
<dbReference type="Gene3D" id="3.30.300.30">
    <property type="match status" value="1"/>
</dbReference>
<dbReference type="Gene3D" id="3.40.50.12780">
    <property type="entry name" value="N-terminal domain of ligase-like"/>
    <property type="match status" value="1"/>
</dbReference>
<dbReference type="HAMAP" id="MF_00731">
    <property type="entry name" value="MenE"/>
    <property type="match status" value="1"/>
</dbReference>
<dbReference type="InterPro" id="IPR025110">
    <property type="entry name" value="AMP-bd_C"/>
</dbReference>
<dbReference type="InterPro" id="IPR045851">
    <property type="entry name" value="AMP-bd_C_sf"/>
</dbReference>
<dbReference type="InterPro" id="IPR020845">
    <property type="entry name" value="AMP-binding_CS"/>
</dbReference>
<dbReference type="InterPro" id="IPR000873">
    <property type="entry name" value="AMP-dep_synth/lig_dom"/>
</dbReference>
<dbReference type="InterPro" id="IPR042099">
    <property type="entry name" value="ANL_N_sf"/>
</dbReference>
<dbReference type="InterPro" id="IPR050237">
    <property type="entry name" value="ATP-dep_AMP-bd_enzyme"/>
</dbReference>
<dbReference type="InterPro" id="IPR010192">
    <property type="entry name" value="MenE"/>
</dbReference>
<dbReference type="NCBIfam" id="TIGR01923">
    <property type="entry name" value="menE"/>
    <property type="match status" value="1"/>
</dbReference>
<dbReference type="NCBIfam" id="NF002966">
    <property type="entry name" value="PRK03640.1"/>
    <property type="match status" value="1"/>
</dbReference>
<dbReference type="PANTHER" id="PTHR43767">
    <property type="entry name" value="LONG-CHAIN-FATTY-ACID--COA LIGASE"/>
    <property type="match status" value="1"/>
</dbReference>
<dbReference type="PANTHER" id="PTHR43767:SF1">
    <property type="entry name" value="NONRIBOSOMAL PEPTIDE SYNTHASE PES1 (EUROFUNG)-RELATED"/>
    <property type="match status" value="1"/>
</dbReference>
<dbReference type="Pfam" id="PF00501">
    <property type="entry name" value="AMP-binding"/>
    <property type="match status" value="1"/>
</dbReference>
<dbReference type="Pfam" id="PF13193">
    <property type="entry name" value="AMP-binding_C"/>
    <property type="match status" value="1"/>
</dbReference>
<dbReference type="SUPFAM" id="SSF56801">
    <property type="entry name" value="Acetyl-CoA synthetase-like"/>
    <property type="match status" value="1"/>
</dbReference>
<dbReference type="PROSITE" id="PS00455">
    <property type="entry name" value="AMP_BINDING"/>
    <property type="match status" value="1"/>
</dbReference>
<protein>
    <recommendedName>
        <fullName evidence="1">2-succinylbenzoate--CoA ligase</fullName>
        <ecNumber evidence="1">6.2.1.26</ecNumber>
    </recommendedName>
    <alternativeName>
        <fullName evidence="1">o-succinylbenzoyl-CoA synthetase</fullName>
        <shortName evidence="1">OSB-CoA synthetase</shortName>
    </alternativeName>
</protein>
<organism>
    <name type="scientific">Bacillus anthracis (strain A0248)</name>
    <dbReference type="NCBI Taxonomy" id="592021"/>
    <lineage>
        <taxon>Bacteria</taxon>
        <taxon>Bacillati</taxon>
        <taxon>Bacillota</taxon>
        <taxon>Bacilli</taxon>
        <taxon>Bacillales</taxon>
        <taxon>Bacillaceae</taxon>
        <taxon>Bacillus</taxon>
        <taxon>Bacillus cereus group</taxon>
    </lineage>
</organism>
<sequence length="482" mass="53748">MMETMPNWLKQRAFLTPDRTAIEIEEEKVTFMQLHEKVVSVCEHLTHVGVNRGQKVAVLMKNGMEMITVIHALSYVGAVAVLLNTRLSREELLWQMDDAEVICLVTDQDFEAKDIPVYSFAEVMNGPKEEASIQEEFSLREAMTIIYTSGTTGKPKGVILTYGNHWASAVGSSLNLGLRDDDCWLACMPMFHVGGLSLLMKNIMYGMRILLVPKYDADFIHKALQTRGVTIISVVSKMLTDLLERLGEGTYPSSFRCMLLGGGPAPKPLLETCVDKGIPVYQTYGMTETSSQICTLSADYMLTKVGSAGKPLFQCQLRIEKDGVVVPPFAEGEIVVKGPNVTGGYFNREDATRETIQNGWLHTGDLGYLDEEGFLYVLDRRSDLIISGGENIYPAQIEEVLLSHPMVAEAGVVGMTDDKWGQVPAAFVVKSGEITEEEILHFCEEKLAKYKVPKKACFLEELPRNASKKLLRRELRQLVEEM</sequence>
<evidence type="ECO:0000255" key="1">
    <source>
        <dbReference type="HAMAP-Rule" id="MF_00731"/>
    </source>
</evidence>
<name>MENE_BACAA</name>
<feature type="chain" id="PRO_1000148086" description="2-succinylbenzoate--CoA ligase">
    <location>
        <begin position="1"/>
        <end position="482"/>
    </location>
</feature>
<comment type="function">
    <text evidence="1">Converts 2-succinylbenzoate (OSB) to 2-succinylbenzoyl-CoA (OSB-CoA).</text>
</comment>
<comment type="catalytic activity">
    <reaction evidence="1">
        <text>2-succinylbenzoate + ATP + CoA = 2-succinylbenzoyl-CoA + AMP + diphosphate</text>
        <dbReference type="Rhea" id="RHEA:17009"/>
        <dbReference type="ChEBI" id="CHEBI:18325"/>
        <dbReference type="ChEBI" id="CHEBI:30616"/>
        <dbReference type="ChEBI" id="CHEBI:33019"/>
        <dbReference type="ChEBI" id="CHEBI:57287"/>
        <dbReference type="ChEBI" id="CHEBI:57364"/>
        <dbReference type="ChEBI" id="CHEBI:456215"/>
        <dbReference type="EC" id="6.2.1.26"/>
    </reaction>
</comment>
<comment type="pathway">
    <text evidence="1">Quinol/quinone metabolism; 1,4-dihydroxy-2-naphthoate biosynthesis; 1,4-dihydroxy-2-naphthoate from chorismate: step 5/7.</text>
</comment>
<comment type="pathway">
    <text evidence="1">Quinol/quinone metabolism; menaquinone biosynthesis.</text>
</comment>
<comment type="similarity">
    <text evidence="1">Belongs to the ATP-dependent AMP-binding enzyme family. MenE subfamily.</text>
</comment>
<proteinExistence type="inferred from homology"/>
<accession>C3PCK3</accession>
<gene>
    <name evidence="1" type="primary">menE</name>
    <name type="ordered locus">BAA_5120</name>
</gene>